<evidence type="ECO:0000250" key="1">
    <source>
        <dbReference type="UniProtKB" id="O14880"/>
    </source>
</evidence>
<evidence type="ECO:0000255" key="2"/>
<evidence type="ECO:0000305" key="3"/>
<evidence type="ECO:0000312" key="4">
    <source>
        <dbReference type="MGI" id="MGI:1913697"/>
    </source>
</evidence>
<sequence>MAVLSKEYGFVLLTGAASFVMVLHLAINVGKARKKYKVEYPVMYSTDPENGHMFNCIQRAHQNTLEVYPPFLFFLTVGGVYHPRIASGLGLAWIIGRVLYAYGYYTGDPSKRYRGAVGSLALFALMGTTVCSAFQHLGWIRPGLGYGSRSCHH</sequence>
<organism>
    <name type="scientific">Mus musculus</name>
    <name type="common">Mouse</name>
    <dbReference type="NCBI Taxonomy" id="10090"/>
    <lineage>
        <taxon>Eukaryota</taxon>
        <taxon>Metazoa</taxon>
        <taxon>Chordata</taxon>
        <taxon>Craniata</taxon>
        <taxon>Vertebrata</taxon>
        <taxon>Euteleostomi</taxon>
        <taxon>Mammalia</taxon>
        <taxon>Eutheria</taxon>
        <taxon>Euarchontoglires</taxon>
        <taxon>Glires</taxon>
        <taxon>Rodentia</taxon>
        <taxon>Myomorpha</taxon>
        <taxon>Muroidea</taxon>
        <taxon>Muridae</taxon>
        <taxon>Murinae</taxon>
        <taxon>Mus</taxon>
        <taxon>Mus</taxon>
    </lineage>
</organism>
<reference key="1">
    <citation type="journal article" date="2005" name="Science">
        <title>The transcriptional landscape of the mammalian genome.</title>
        <authorList>
            <person name="Carninci P."/>
            <person name="Kasukawa T."/>
            <person name="Katayama S."/>
            <person name="Gough J."/>
            <person name="Frith M.C."/>
            <person name="Maeda N."/>
            <person name="Oyama R."/>
            <person name="Ravasi T."/>
            <person name="Lenhard B."/>
            <person name="Wells C."/>
            <person name="Kodzius R."/>
            <person name="Shimokawa K."/>
            <person name="Bajic V.B."/>
            <person name="Brenner S.E."/>
            <person name="Batalov S."/>
            <person name="Forrest A.R."/>
            <person name="Zavolan M."/>
            <person name="Davis M.J."/>
            <person name="Wilming L.G."/>
            <person name="Aidinis V."/>
            <person name="Allen J.E."/>
            <person name="Ambesi-Impiombato A."/>
            <person name="Apweiler R."/>
            <person name="Aturaliya R.N."/>
            <person name="Bailey T.L."/>
            <person name="Bansal M."/>
            <person name="Baxter L."/>
            <person name="Beisel K.W."/>
            <person name="Bersano T."/>
            <person name="Bono H."/>
            <person name="Chalk A.M."/>
            <person name="Chiu K.P."/>
            <person name="Choudhary V."/>
            <person name="Christoffels A."/>
            <person name="Clutterbuck D.R."/>
            <person name="Crowe M.L."/>
            <person name="Dalla E."/>
            <person name="Dalrymple B.P."/>
            <person name="de Bono B."/>
            <person name="Della Gatta G."/>
            <person name="di Bernardo D."/>
            <person name="Down T."/>
            <person name="Engstrom P."/>
            <person name="Fagiolini M."/>
            <person name="Faulkner G."/>
            <person name="Fletcher C.F."/>
            <person name="Fukushima T."/>
            <person name="Furuno M."/>
            <person name="Futaki S."/>
            <person name="Gariboldi M."/>
            <person name="Georgii-Hemming P."/>
            <person name="Gingeras T.R."/>
            <person name="Gojobori T."/>
            <person name="Green R.E."/>
            <person name="Gustincich S."/>
            <person name="Harbers M."/>
            <person name="Hayashi Y."/>
            <person name="Hensch T.K."/>
            <person name="Hirokawa N."/>
            <person name="Hill D."/>
            <person name="Huminiecki L."/>
            <person name="Iacono M."/>
            <person name="Ikeo K."/>
            <person name="Iwama A."/>
            <person name="Ishikawa T."/>
            <person name="Jakt M."/>
            <person name="Kanapin A."/>
            <person name="Katoh M."/>
            <person name="Kawasawa Y."/>
            <person name="Kelso J."/>
            <person name="Kitamura H."/>
            <person name="Kitano H."/>
            <person name="Kollias G."/>
            <person name="Krishnan S.P."/>
            <person name="Kruger A."/>
            <person name="Kummerfeld S.K."/>
            <person name="Kurochkin I.V."/>
            <person name="Lareau L.F."/>
            <person name="Lazarevic D."/>
            <person name="Lipovich L."/>
            <person name="Liu J."/>
            <person name="Liuni S."/>
            <person name="McWilliam S."/>
            <person name="Madan Babu M."/>
            <person name="Madera M."/>
            <person name="Marchionni L."/>
            <person name="Matsuda H."/>
            <person name="Matsuzawa S."/>
            <person name="Miki H."/>
            <person name="Mignone F."/>
            <person name="Miyake S."/>
            <person name="Morris K."/>
            <person name="Mottagui-Tabar S."/>
            <person name="Mulder N."/>
            <person name="Nakano N."/>
            <person name="Nakauchi H."/>
            <person name="Ng P."/>
            <person name="Nilsson R."/>
            <person name="Nishiguchi S."/>
            <person name="Nishikawa S."/>
            <person name="Nori F."/>
            <person name="Ohara O."/>
            <person name="Okazaki Y."/>
            <person name="Orlando V."/>
            <person name="Pang K.C."/>
            <person name="Pavan W.J."/>
            <person name="Pavesi G."/>
            <person name="Pesole G."/>
            <person name="Petrovsky N."/>
            <person name="Piazza S."/>
            <person name="Reed J."/>
            <person name="Reid J.F."/>
            <person name="Ring B.Z."/>
            <person name="Ringwald M."/>
            <person name="Rost B."/>
            <person name="Ruan Y."/>
            <person name="Salzberg S.L."/>
            <person name="Sandelin A."/>
            <person name="Schneider C."/>
            <person name="Schoenbach C."/>
            <person name="Sekiguchi K."/>
            <person name="Semple C.A."/>
            <person name="Seno S."/>
            <person name="Sessa L."/>
            <person name="Sheng Y."/>
            <person name="Shibata Y."/>
            <person name="Shimada H."/>
            <person name="Shimada K."/>
            <person name="Silva D."/>
            <person name="Sinclair B."/>
            <person name="Sperling S."/>
            <person name="Stupka E."/>
            <person name="Sugiura K."/>
            <person name="Sultana R."/>
            <person name="Takenaka Y."/>
            <person name="Taki K."/>
            <person name="Tammoja K."/>
            <person name="Tan S.L."/>
            <person name="Tang S."/>
            <person name="Taylor M.S."/>
            <person name="Tegner J."/>
            <person name="Teichmann S.A."/>
            <person name="Ueda H.R."/>
            <person name="van Nimwegen E."/>
            <person name="Verardo R."/>
            <person name="Wei C.L."/>
            <person name="Yagi K."/>
            <person name="Yamanishi H."/>
            <person name="Zabarovsky E."/>
            <person name="Zhu S."/>
            <person name="Zimmer A."/>
            <person name="Hide W."/>
            <person name="Bult C."/>
            <person name="Grimmond S.M."/>
            <person name="Teasdale R.D."/>
            <person name="Liu E.T."/>
            <person name="Brusic V."/>
            <person name="Quackenbush J."/>
            <person name="Wahlestedt C."/>
            <person name="Mattick J.S."/>
            <person name="Hume D.A."/>
            <person name="Kai C."/>
            <person name="Sasaki D."/>
            <person name="Tomaru Y."/>
            <person name="Fukuda S."/>
            <person name="Kanamori-Katayama M."/>
            <person name="Suzuki M."/>
            <person name="Aoki J."/>
            <person name="Arakawa T."/>
            <person name="Iida J."/>
            <person name="Imamura K."/>
            <person name="Itoh M."/>
            <person name="Kato T."/>
            <person name="Kawaji H."/>
            <person name="Kawagashira N."/>
            <person name="Kawashima T."/>
            <person name="Kojima M."/>
            <person name="Kondo S."/>
            <person name="Konno H."/>
            <person name="Nakano K."/>
            <person name="Ninomiya N."/>
            <person name="Nishio T."/>
            <person name="Okada M."/>
            <person name="Plessy C."/>
            <person name="Shibata K."/>
            <person name="Shiraki T."/>
            <person name="Suzuki S."/>
            <person name="Tagami M."/>
            <person name="Waki K."/>
            <person name="Watahiki A."/>
            <person name="Okamura-Oho Y."/>
            <person name="Suzuki H."/>
            <person name="Kawai J."/>
            <person name="Hayashizaki Y."/>
        </authorList>
    </citation>
    <scope>NUCLEOTIDE SEQUENCE [LARGE SCALE MRNA]</scope>
    <source>
        <strain>C57BL/6J</strain>
        <tissue>Egg</tissue>
        <tissue>Embryo</tissue>
        <tissue>Small intestine</tissue>
    </source>
</reference>
<reference key="2">
    <citation type="journal article" date="2004" name="Genome Res.">
        <title>The status, quality, and expansion of the NIH full-length cDNA project: the Mammalian Gene Collection (MGC).</title>
        <authorList>
            <consortium name="The MGC Project Team"/>
        </authorList>
    </citation>
    <scope>NUCLEOTIDE SEQUENCE [LARGE SCALE MRNA]</scope>
</reference>
<reference key="3">
    <citation type="submission" date="2007-04" db="UniProtKB">
        <authorList>
            <person name="Lubec G."/>
            <person name="Kang S.U."/>
        </authorList>
    </citation>
    <scope>PROTEIN SEQUENCE OF 85-97</scope>
    <scope>IDENTIFICATION BY MASS SPECTROMETRY</scope>
    <source>
        <strain>C57BL/6J</strain>
        <tissue>Brain</tissue>
    </source>
</reference>
<reference key="4">
    <citation type="journal article" date="2010" name="Cell">
        <title>A tissue-specific atlas of mouse protein phosphorylation and expression.</title>
        <authorList>
            <person name="Huttlin E.L."/>
            <person name="Jedrychowski M.P."/>
            <person name="Elias J.E."/>
            <person name="Goswami T."/>
            <person name="Rad R."/>
            <person name="Beausoleil S.A."/>
            <person name="Villen J."/>
            <person name="Haas W."/>
            <person name="Sowa M.E."/>
            <person name="Gygi S.P."/>
        </authorList>
    </citation>
    <scope>IDENTIFICATION BY MASS SPECTROMETRY [LARGE SCALE ANALYSIS]</scope>
    <source>
        <tissue>Brain</tissue>
        <tissue>Brown adipose tissue</tissue>
        <tissue>Heart</tissue>
        <tissue>Kidney</tissue>
        <tissue>Liver</tissue>
        <tissue>Lung</tissue>
        <tissue>Pancreas</tissue>
        <tissue>Spleen</tissue>
        <tissue>Testis</tissue>
    </source>
</reference>
<comment type="function">
    <text evidence="1">Displays both glutathione S-transferase and glutathione peroxidase activities toward oxyeicosanoids. Catalyzes the Michael addition reaction of reduced glutathione (GSH) to electrophilic eicosanoids to form GSH adducts, as part of detoxification or metabolic shunt processes. Mediates GSH conjugation to leukotriene A4 to form the sulfidopeptide leukotriene C4. Metabolizes cyclopentenone prostanoids, specifically mediates GSH addition at C9 within the cyclopentenone ring of 15-deoxy-Delta12,14-prostaglandin J2 (15dPGJ2) to form 15dPGJ2-glutathione. L-cysteine cannot substitute for GSH. Catalyzes the reduction of eicosanoid peroxides to yield eicosanoid hydroxides.</text>
</comment>
<comment type="catalytic activity">
    <reaction evidence="1">
        <text>leukotriene C4 = leukotriene A4 + glutathione</text>
        <dbReference type="Rhea" id="RHEA:17617"/>
        <dbReference type="ChEBI" id="CHEBI:57463"/>
        <dbReference type="ChEBI" id="CHEBI:57925"/>
        <dbReference type="ChEBI" id="CHEBI:57973"/>
        <dbReference type="EC" id="4.4.1.20"/>
    </reaction>
    <physiologicalReaction direction="right-to-left" evidence="1">
        <dbReference type="Rhea" id="RHEA:17619"/>
    </physiologicalReaction>
</comment>
<comment type="catalytic activity">
    <reaction evidence="1">
        <text>15-deoxy-Delta(12,14)-prostaglandin J2 + glutathione = 15-deoxy-Delta(12,14)-prostaglandin J2-S-(R)-glutathione</text>
        <dbReference type="Rhea" id="RHEA:75963"/>
        <dbReference type="ChEBI" id="CHEBI:57925"/>
        <dbReference type="ChEBI" id="CHEBI:85236"/>
        <dbReference type="ChEBI" id="CHEBI:194498"/>
    </reaction>
    <physiologicalReaction direction="left-to-right" evidence="1">
        <dbReference type="Rhea" id="RHEA:75964"/>
    </physiologicalReaction>
</comment>
<comment type="catalytic activity">
    <reaction evidence="1">
        <text>(5S)-hydroperoxy-(6E,8Z,11Z,14Z)-eicosatetraenoate + 2 glutathione = (5S)-hydroxy-(6E,8Z,11Z,14Z)-eicosatetraenoate + glutathione disulfide + H2O</text>
        <dbReference type="Rhea" id="RHEA:48620"/>
        <dbReference type="ChEBI" id="CHEBI:15377"/>
        <dbReference type="ChEBI" id="CHEBI:57450"/>
        <dbReference type="ChEBI" id="CHEBI:57925"/>
        <dbReference type="ChEBI" id="CHEBI:58297"/>
        <dbReference type="ChEBI" id="CHEBI:90632"/>
    </reaction>
    <physiologicalReaction direction="left-to-right" evidence="1">
        <dbReference type="Rhea" id="RHEA:48621"/>
    </physiologicalReaction>
</comment>
<comment type="pathway">
    <text evidence="1">Lipid metabolism; leukotriene C4 biosynthesis.</text>
</comment>
<comment type="pathway">
    <text evidence="1">Lipid metabolism; arachidonate metabolism.</text>
</comment>
<comment type="subcellular location">
    <subcellularLocation>
        <location evidence="1">Mitochondrion outer membrane</location>
        <topology evidence="2">Multi-pass membrane protein</topology>
    </subcellularLocation>
</comment>
<comment type="similarity">
    <text evidence="3">Belongs to the MAPEG family.</text>
</comment>
<proteinExistence type="evidence at protein level"/>
<name>MGST3_MOUSE</name>
<gene>
    <name evidence="4" type="primary">Mgst3</name>
</gene>
<dbReference type="EC" id="2.5.1.-" evidence="1"/>
<dbReference type="EC" id="1.11.1.-" evidence="1"/>
<dbReference type="EC" id="4.4.1.20" evidence="1"/>
<dbReference type="EMBL" id="AK003246">
    <property type="protein sequence ID" value="BAB22665.1"/>
    <property type="molecule type" value="mRNA"/>
</dbReference>
<dbReference type="EMBL" id="AK003309">
    <property type="protein sequence ID" value="BAB22706.1"/>
    <property type="molecule type" value="mRNA"/>
</dbReference>
<dbReference type="EMBL" id="AK003476">
    <property type="protein sequence ID" value="BAB22808.1"/>
    <property type="molecule type" value="mRNA"/>
</dbReference>
<dbReference type="EMBL" id="AK003492">
    <property type="protein sequence ID" value="BAB22819.1"/>
    <property type="molecule type" value="mRNA"/>
</dbReference>
<dbReference type="EMBL" id="AK008533">
    <property type="protein sequence ID" value="BAB25726.1"/>
    <property type="molecule type" value="mRNA"/>
</dbReference>
<dbReference type="EMBL" id="AK135742">
    <property type="protein sequence ID" value="BAE22638.1"/>
    <property type="molecule type" value="mRNA"/>
</dbReference>
<dbReference type="EMBL" id="BC029669">
    <property type="protein sequence ID" value="AAH29669.1"/>
    <property type="molecule type" value="mRNA"/>
</dbReference>
<dbReference type="CCDS" id="CCDS15457.1"/>
<dbReference type="RefSeq" id="NP_079845.1">
    <property type="nucleotide sequence ID" value="NM_025569.2"/>
</dbReference>
<dbReference type="SMR" id="Q9CPU4"/>
<dbReference type="BioGRID" id="211481">
    <property type="interactions" value="7"/>
</dbReference>
<dbReference type="FunCoup" id="Q9CPU4">
    <property type="interactions" value="1459"/>
</dbReference>
<dbReference type="IntAct" id="Q9CPU4">
    <property type="interactions" value="4"/>
</dbReference>
<dbReference type="STRING" id="10090.ENSMUSP00000028005"/>
<dbReference type="GlyGen" id="Q9CPU4">
    <property type="glycosylation" value="1 site, 1 O-linked glycan (1 site)"/>
</dbReference>
<dbReference type="iPTMnet" id="Q9CPU4"/>
<dbReference type="PhosphoSitePlus" id="Q9CPU4"/>
<dbReference type="SwissPalm" id="Q9CPU4"/>
<dbReference type="jPOST" id="Q9CPU4"/>
<dbReference type="PaxDb" id="10090-ENSMUSP00000028005"/>
<dbReference type="PeptideAtlas" id="Q9CPU4"/>
<dbReference type="ProteomicsDB" id="290226"/>
<dbReference type="Pumba" id="Q9CPU4"/>
<dbReference type="Antibodypedia" id="34331">
    <property type="antibodies" value="125 antibodies from 21 providers"/>
</dbReference>
<dbReference type="DNASU" id="66447"/>
<dbReference type="Ensembl" id="ENSMUST00000028005.3">
    <property type="protein sequence ID" value="ENSMUSP00000028005.3"/>
    <property type="gene ID" value="ENSMUSG00000026688.6"/>
</dbReference>
<dbReference type="GeneID" id="66447"/>
<dbReference type="KEGG" id="mmu:66447"/>
<dbReference type="UCSC" id="uc007dky.1">
    <property type="organism name" value="mouse"/>
</dbReference>
<dbReference type="AGR" id="MGI:1913697"/>
<dbReference type="CTD" id="4259"/>
<dbReference type="MGI" id="MGI:1913697">
    <property type="gene designation" value="Mgst3"/>
</dbReference>
<dbReference type="VEuPathDB" id="HostDB:ENSMUSG00000026688"/>
<dbReference type="eggNOG" id="ENOG502S4E5">
    <property type="taxonomic scope" value="Eukaryota"/>
</dbReference>
<dbReference type="GeneTree" id="ENSGT00390000008608"/>
<dbReference type="HOGENOM" id="CLU_110291_1_0_1"/>
<dbReference type="InParanoid" id="Q9CPU4"/>
<dbReference type="OMA" id="ACQHLGW"/>
<dbReference type="OrthoDB" id="410651at2759"/>
<dbReference type="PhylomeDB" id="Q9CPU4"/>
<dbReference type="TreeFam" id="TF105328"/>
<dbReference type="Reactome" id="R-MMU-156590">
    <property type="pathway name" value="Glutathione conjugation"/>
</dbReference>
<dbReference type="Reactome" id="R-MMU-5423646">
    <property type="pathway name" value="Aflatoxin activation and detoxification"/>
</dbReference>
<dbReference type="UniPathway" id="UPA00383"/>
<dbReference type="UniPathway" id="UPA00879"/>
<dbReference type="BioGRID-ORCS" id="66447">
    <property type="hits" value="0 hits in 76 CRISPR screens"/>
</dbReference>
<dbReference type="ChiTaRS" id="Mgst3">
    <property type="organism name" value="mouse"/>
</dbReference>
<dbReference type="PRO" id="PR:Q9CPU4"/>
<dbReference type="Proteomes" id="UP000000589">
    <property type="component" value="Chromosome 1"/>
</dbReference>
<dbReference type="RNAct" id="Q9CPU4">
    <property type="molecule type" value="protein"/>
</dbReference>
<dbReference type="Bgee" id="ENSMUSG00000026688">
    <property type="expression patterns" value="Expressed in fetal liver hematopoietic progenitor cell and 272 other cell types or tissues"/>
</dbReference>
<dbReference type="GO" id="GO:0005741">
    <property type="term" value="C:mitochondrial outer membrane"/>
    <property type="evidence" value="ECO:0000250"/>
    <property type="project" value="UniProtKB"/>
</dbReference>
<dbReference type="GO" id="GO:0004602">
    <property type="term" value="F:glutathione peroxidase activity"/>
    <property type="evidence" value="ECO:0007669"/>
    <property type="project" value="Ensembl"/>
</dbReference>
<dbReference type="GO" id="GO:0004364">
    <property type="term" value="F:glutathione transferase activity"/>
    <property type="evidence" value="ECO:0000250"/>
    <property type="project" value="UniProtKB"/>
</dbReference>
<dbReference type="GO" id="GO:0042802">
    <property type="term" value="F:identical protein binding"/>
    <property type="evidence" value="ECO:0007669"/>
    <property type="project" value="Ensembl"/>
</dbReference>
<dbReference type="GO" id="GO:0004464">
    <property type="term" value="F:leukotriene-C4 synthase activity"/>
    <property type="evidence" value="ECO:0007669"/>
    <property type="project" value="Ensembl"/>
</dbReference>
<dbReference type="GO" id="GO:0019369">
    <property type="term" value="P:arachidonate metabolic process"/>
    <property type="evidence" value="ECO:0007669"/>
    <property type="project" value="UniProtKB-UniPathway"/>
</dbReference>
<dbReference type="GO" id="GO:0019370">
    <property type="term" value="P:leukotriene biosynthetic process"/>
    <property type="evidence" value="ECO:0007669"/>
    <property type="project" value="Ensembl"/>
</dbReference>
<dbReference type="GO" id="GO:0006692">
    <property type="term" value="P:prostanoid metabolic process"/>
    <property type="evidence" value="ECO:0000250"/>
    <property type="project" value="UniProtKB"/>
</dbReference>
<dbReference type="FunFam" id="1.20.120.550:FF:000004">
    <property type="entry name" value="Microsomal glutathione S-transferase 3"/>
    <property type="match status" value="1"/>
</dbReference>
<dbReference type="Gene3D" id="1.20.120.550">
    <property type="entry name" value="Membrane associated eicosanoid/glutathione metabolism-like domain"/>
    <property type="match status" value="1"/>
</dbReference>
<dbReference type="InterPro" id="IPR050997">
    <property type="entry name" value="MAPEG"/>
</dbReference>
<dbReference type="InterPro" id="IPR023352">
    <property type="entry name" value="MAPEG-like_dom_sf"/>
</dbReference>
<dbReference type="InterPro" id="IPR001129">
    <property type="entry name" value="Membr-assoc_MAPEG"/>
</dbReference>
<dbReference type="PANTHER" id="PTHR10250:SF26">
    <property type="entry name" value="GLUTATHIONE S-TRANSFERASE 3, MITOCHONDRIAL"/>
    <property type="match status" value="1"/>
</dbReference>
<dbReference type="PANTHER" id="PTHR10250">
    <property type="entry name" value="MICROSOMAL GLUTATHIONE S-TRANSFERASE"/>
    <property type="match status" value="1"/>
</dbReference>
<dbReference type="Pfam" id="PF01124">
    <property type="entry name" value="MAPEG"/>
    <property type="match status" value="1"/>
</dbReference>
<dbReference type="SUPFAM" id="SSF161084">
    <property type="entry name" value="MAPEG domain-like"/>
    <property type="match status" value="1"/>
</dbReference>
<feature type="chain" id="PRO_0000217742" description="Glutathione S-transferase 3, mitochondrial">
    <location>
        <begin position="1"/>
        <end position="153"/>
    </location>
</feature>
<feature type="topological domain" description="Mitochondrial intermembrane" evidence="3">
    <location>
        <begin position="1"/>
        <end position="8"/>
    </location>
</feature>
<feature type="transmembrane region" description="Helical" evidence="2">
    <location>
        <begin position="9"/>
        <end position="29"/>
    </location>
</feature>
<feature type="topological domain" description="Cytoplasmic" evidence="3">
    <location>
        <begin position="30"/>
        <end position="70"/>
    </location>
</feature>
<feature type="transmembrane region" description="Helical" evidence="2">
    <location>
        <begin position="71"/>
        <end position="91"/>
    </location>
</feature>
<feature type="topological domain" description="Mitochondrial intermembrane" evidence="3">
    <location>
        <begin position="92"/>
        <end position="119"/>
    </location>
</feature>
<feature type="transmembrane region" description="Helical" evidence="2">
    <location>
        <begin position="120"/>
        <end position="140"/>
    </location>
</feature>
<feature type="topological domain" description="Cytoplasmic" evidence="3">
    <location>
        <begin position="141"/>
        <end position="153"/>
    </location>
</feature>
<feature type="lipid moiety-binding region" description="S-palmitoyl cysteine" evidence="1">
    <location>
        <position position="151"/>
    </location>
</feature>
<feature type="sequence conflict" description="In Ref. 1; BAB25726." evidence="3" ref="1">
    <original>P</original>
    <variation>R</variation>
    <location>
        <position position="142"/>
    </location>
</feature>
<accession>Q9CPU4</accession>
<accession>Q3UXC5</accession>
<accession>Q9D834</accession>
<keyword id="KW-0903">Direct protein sequencing</keyword>
<keyword id="KW-0443">Lipid metabolism</keyword>
<keyword id="KW-0449">Lipoprotein</keyword>
<keyword id="KW-0456">Lyase</keyword>
<keyword id="KW-0472">Membrane</keyword>
<keyword id="KW-0496">Mitochondrion</keyword>
<keyword id="KW-1000">Mitochondrion outer membrane</keyword>
<keyword id="KW-0560">Oxidoreductase</keyword>
<keyword id="KW-0564">Palmitate</keyword>
<keyword id="KW-1185">Reference proteome</keyword>
<keyword id="KW-0808">Transferase</keyword>
<keyword id="KW-0812">Transmembrane</keyword>
<keyword id="KW-1133">Transmembrane helix</keyword>
<protein>
    <recommendedName>
        <fullName evidence="1">Glutathione S-transferase 3, mitochondrial</fullName>
        <ecNumber evidence="1">2.5.1.-</ecNumber>
    </recommendedName>
    <alternativeName>
        <fullName evidence="1">Glutathione peroxidase MGST3</fullName>
        <ecNumber evidence="1">1.11.1.-</ecNumber>
    </alternativeName>
    <alternativeName>
        <fullName evidence="1">LTC4 synthase MGST3</fullName>
        <ecNumber evidence="1">4.4.1.20</ecNumber>
    </alternativeName>
</protein>